<comment type="function">
    <text evidence="1">Catalyzes the transfer of an acyl group from acyl-phosphate (acyl-PO(4)) to glycerol-3-phosphate (G3P) to form lysophosphatidic acid (LPA). This enzyme utilizes acyl-phosphate as fatty acyl donor, but not acyl-CoA or acyl-ACP.</text>
</comment>
<comment type="catalytic activity">
    <reaction evidence="1">
        <text>an acyl phosphate + sn-glycerol 3-phosphate = a 1-acyl-sn-glycero-3-phosphate + phosphate</text>
        <dbReference type="Rhea" id="RHEA:34075"/>
        <dbReference type="ChEBI" id="CHEBI:43474"/>
        <dbReference type="ChEBI" id="CHEBI:57597"/>
        <dbReference type="ChEBI" id="CHEBI:57970"/>
        <dbReference type="ChEBI" id="CHEBI:59918"/>
        <dbReference type="EC" id="2.3.1.275"/>
    </reaction>
</comment>
<comment type="pathway">
    <text evidence="1">Lipid metabolism; phospholipid metabolism.</text>
</comment>
<comment type="subunit">
    <text evidence="1">Probably interacts with PlsX.</text>
</comment>
<comment type="subcellular location">
    <subcellularLocation>
        <location evidence="1">Cell membrane</location>
        <topology evidence="1">Multi-pass membrane protein</topology>
    </subcellularLocation>
</comment>
<comment type="similarity">
    <text evidence="1">Belongs to the PlsY family.</text>
</comment>
<proteinExistence type="inferred from homology"/>
<reference key="1">
    <citation type="journal article" date="2002" name="Mol. Microbiol.">
        <title>Genome sequence of Streptococcus agalactiae, a pathogen causing invasive neonatal disease.</title>
        <authorList>
            <person name="Glaser P."/>
            <person name="Rusniok C."/>
            <person name="Buchrieser C."/>
            <person name="Chevalier F."/>
            <person name="Frangeul L."/>
            <person name="Msadek T."/>
            <person name="Zouine M."/>
            <person name="Couve E."/>
            <person name="Lalioui L."/>
            <person name="Poyart C."/>
            <person name="Trieu-Cuot P."/>
            <person name="Kunst F."/>
        </authorList>
    </citation>
    <scope>NUCLEOTIDE SEQUENCE [LARGE SCALE GENOMIC DNA]</scope>
    <source>
        <strain>NEM316</strain>
    </source>
</reference>
<accession>P67166</accession>
<accession>P59254</accession>
<feature type="chain" id="PRO_0000188460" description="Glycerol-3-phosphate acyltransferase">
    <location>
        <begin position="1"/>
        <end position="212"/>
    </location>
</feature>
<feature type="transmembrane region" description="Helical" evidence="1">
    <location>
        <begin position="3"/>
        <end position="23"/>
    </location>
</feature>
<feature type="transmembrane region" description="Helical" evidence="1">
    <location>
        <begin position="70"/>
        <end position="90"/>
    </location>
</feature>
<feature type="transmembrane region" description="Helical" evidence="1">
    <location>
        <begin position="110"/>
        <end position="130"/>
    </location>
</feature>
<feature type="transmembrane region" description="Helical" evidence="1">
    <location>
        <begin position="143"/>
        <end position="163"/>
    </location>
</feature>
<feature type="transmembrane region" description="Helical" evidence="1">
    <location>
        <begin position="164"/>
        <end position="184"/>
    </location>
</feature>
<name>PLSY_STRA3</name>
<sequence length="212" mass="23403">MNIIIMIIIAYLLGSIQTGLWIGKYFYQVNLRQHGSGNTGTTNTFRILGVKAGIVTLTIDILKGTLATLIPIILGITTVSPFFIGFFAIIGHTFPIFAQFKGGKAVATSAGVLLGFAPSFFLYLLVIFLLTLYLFSMISLSSITVAVVGILSVLIFPLVGFILTDYDWIFTTVVILMALTIIIRHQDNIKRIRKRQENLVPFGLNLSKQKNK</sequence>
<dbReference type="EC" id="2.3.1.275" evidence="1"/>
<dbReference type="EMBL" id="AL766849">
    <property type="protein sequence ID" value="CAD46889.1"/>
    <property type="molecule type" value="Genomic_DNA"/>
</dbReference>
<dbReference type="RefSeq" id="WP_001021319.1">
    <property type="nucleotide sequence ID" value="NC_004368.1"/>
</dbReference>
<dbReference type="SMR" id="P67166"/>
<dbReference type="KEGG" id="san:gbs1230"/>
<dbReference type="eggNOG" id="COG0344">
    <property type="taxonomic scope" value="Bacteria"/>
</dbReference>
<dbReference type="HOGENOM" id="CLU_081254_0_0_9"/>
<dbReference type="UniPathway" id="UPA00085"/>
<dbReference type="Proteomes" id="UP000000823">
    <property type="component" value="Chromosome"/>
</dbReference>
<dbReference type="GO" id="GO:0005886">
    <property type="term" value="C:plasma membrane"/>
    <property type="evidence" value="ECO:0007669"/>
    <property type="project" value="UniProtKB-SubCell"/>
</dbReference>
<dbReference type="GO" id="GO:0043772">
    <property type="term" value="F:acyl-phosphate glycerol-3-phosphate acyltransferase activity"/>
    <property type="evidence" value="ECO:0007669"/>
    <property type="project" value="UniProtKB-UniRule"/>
</dbReference>
<dbReference type="GO" id="GO:0008654">
    <property type="term" value="P:phospholipid biosynthetic process"/>
    <property type="evidence" value="ECO:0007669"/>
    <property type="project" value="UniProtKB-UniRule"/>
</dbReference>
<dbReference type="HAMAP" id="MF_01043">
    <property type="entry name" value="PlsY"/>
    <property type="match status" value="1"/>
</dbReference>
<dbReference type="InterPro" id="IPR003811">
    <property type="entry name" value="G3P_acylTferase_PlsY"/>
</dbReference>
<dbReference type="NCBIfam" id="TIGR00023">
    <property type="entry name" value="glycerol-3-phosphate 1-O-acyltransferase PlsY"/>
    <property type="match status" value="1"/>
</dbReference>
<dbReference type="PANTHER" id="PTHR30309:SF0">
    <property type="entry name" value="GLYCEROL-3-PHOSPHATE ACYLTRANSFERASE-RELATED"/>
    <property type="match status" value="1"/>
</dbReference>
<dbReference type="PANTHER" id="PTHR30309">
    <property type="entry name" value="INNER MEMBRANE PROTEIN YGIH"/>
    <property type="match status" value="1"/>
</dbReference>
<dbReference type="Pfam" id="PF02660">
    <property type="entry name" value="G3P_acyltransf"/>
    <property type="match status" value="1"/>
</dbReference>
<dbReference type="SMART" id="SM01207">
    <property type="entry name" value="G3P_acyltransf"/>
    <property type="match status" value="1"/>
</dbReference>
<keyword id="KW-1003">Cell membrane</keyword>
<keyword id="KW-0444">Lipid biosynthesis</keyword>
<keyword id="KW-0443">Lipid metabolism</keyword>
<keyword id="KW-0472">Membrane</keyword>
<keyword id="KW-0594">Phospholipid biosynthesis</keyword>
<keyword id="KW-1208">Phospholipid metabolism</keyword>
<keyword id="KW-0808">Transferase</keyword>
<keyword id="KW-0812">Transmembrane</keyword>
<keyword id="KW-1133">Transmembrane helix</keyword>
<evidence type="ECO:0000255" key="1">
    <source>
        <dbReference type="HAMAP-Rule" id="MF_01043"/>
    </source>
</evidence>
<gene>
    <name evidence="1" type="primary">plsY</name>
    <name type="ordered locus">gbs1230</name>
</gene>
<protein>
    <recommendedName>
        <fullName evidence="1">Glycerol-3-phosphate acyltransferase</fullName>
    </recommendedName>
    <alternativeName>
        <fullName evidence="1">Acyl-PO4 G3P acyltransferase</fullName>
    </alternativeName>
    <alternativeName>
        <fullName evidence="1">Acyl-phosphate--glycerol-3-phosphate acyltransferase</fullName>
    </alternativeName>
    <alternativeName>
        <fullName evidence="1">G3P acyltransferase</fullName>
        <shortName evidence="1">GPAT</shortName>
        <ecNumber evidence="1">2.3.1.275</ecNumber>
    </alternativeName>
    <alternativeName>
        <fullName evidence="1">Lysophosphatidic acid synthase</fullName>
        <shortName evidence="1">LPA synthase</shortName>
    </alternativeName>
</protein>
<organism>
    <name type="scientific">Streptococcus agalactiae serotype III (strain NEM316)</name>
    <dbReference type="NCBI Taxonomy" id="211110"/>
    <lineage>
        <taxon>Bacteria</taxon>
        <taxon>Bacillati</taxon>
        <taxon>Bacillota</taxon>
        <taxon>Bacilli</taxon>
        <taxon>Lactobacillales</taxon>
        <taxon>Streptococcaceae</taxon>
        <taxon>Streptococcus</taxon>
    </lineage>
</organism>